<comment type="function">
    <text evidence="1">Thiol-specific peroxidase that catalyzes the reduction of hydrogen peroxide and organic hydroperoxides to water and alcohols, respectively. Plays a role in cell protection against oxidative stress by detoxifying peroxides.</text>
</comment>
<comment type="catalytic activity">
    <reaction evidence="1">
        <text>a hydroperoxide + NADH + H(+) = an alcohol + NAD(+) + H2O</text>
        <dbReference type="Rhea" id="RHEA:62628"/>
        <dbReference type="ChEBI" id="CHEBI:15377"/>
        <dbReference type="ChEBI" id="CHEBI:15378"/>
        <dbReference type="ChEBI" id="CHEBI:30879"/>
        <dbReference type="ChEBI" id="CHEBI:35924"/>
        <dbReference type="ChEBI" id="CHEBI:57540"/>
        <dbReference type="ChEBI" id="CHEBI:57945"/>
        <dbReference type="EC" id="1.11.1.26"/>
    </reaction>
</comment>
<comment type="subunit">
    <text evidence="1">Homodimer; disulfide-linked, upon oxidation. 5 homodimers assemble to form a ring-like decamer.</text>
</comment>
<comment type="subcellular location">
    <subcellularLocation>
        <location evidence="2">Cytoplasm</location>
    </subcellularLocation>
</comment>
<comment type="miscellaneous">
    <text evidence="1">The active site is a conserved redox-active cysteine residue, the peroxidatic cysteine (C(P)), which makes the nucleophilic attack on the peroxide substrate. The peroxide oxidizes the C(P)-SH to cysteine sulfenic acid (C(P)-SOH), which then reacts with another cysteine residue, the resolving cysteine (C(R)), to form a disulfide bridge. The disulfide is subsequently reduced by an appropriate electron donor to complete the catalytic cycle. In this typical 2-Cys peroxiredoxin, C(R) is provided by the other dimeric subunit to form an intersubunit disulfide. The disulfide is subsequently reduced by AhpF.</text>
</comment>
<comment type="similarity">
    <text evidence="4">Belongs to the peroxiredoxin family. AhpC/Prx1 subfamily.</text>
</comment>
<organism>
    <name type="scientific">Staphylococcus aureus (strain Mu50 / ATCC 700699)</name>
    <dbReference type="NCBI Taxonomy" id="158878"/>
    <lineage>
        <taxon>Bacteria</taxon>
        <taxon>Bacillati</taxon>
        <taxon>Bacillota</taxon>
        <taxon>Bacilli</taxon>
        <taxon>Bacillales</taxon>
        <taxon>Staphylococcaceae</taxon>
        <taxon>Staphylococcus</taxon>
    </lineage>
</organism>
<name>AHPC_STAAM</name>
<keyword id="KW-0049">Antioxidant</keyword>
<keyword id="KW-0963">Cytoplasm</keyword>
<keyword id="KW-1015">Disulfide bond</keyword>
<keyword id="KW-0560">Oxidoreductase</keyword>
<keyword id="KW-0575">Peroxidase</keyword>
<keyword id="KW-0676">Redox-active center</keyword>
<feature type="chain" id="PRO_0000135123" description="Alkyl hydroperoxide reductase C">
    <location>
        <begin position="1"/>
        <end position="189"/>
    </location>
</feature>
<feature type="domain" description="Thioredoxin" evidence="3">
    <location>
        <begin position="2"/>
        <end position="159"/>
    </location>
</feature>
<feature type="active site" description="Cysteine sulfenic acid (-SOH) intermediate" evidence="1">
    <location>
        <position position="49"/>
    </location>
</feature>
<feature type="disulfide bond" description="Interchain (with C-168); in linked form" evidence="1">
    <location>
        <position position="49"/>
    </location>
</feature>
<feature type="disulfide bond" description="Interchain (with C-49); in linked form" evidence="1">
    <location>
        <position position="168"/>
    </location>
</feature>
<evidence type="ECO:0000250" key="1">
    <source>
        <dbReference type="UniProtKB" id="P0A251"/>
    </source>
</evidence>
<evidence type="ECO:0000250" key="2">
    <source>
        <dbReference type="UniProtKB" id="P0AE08"/>
    </source>
</evidence>
<evidence type="ECO:0000255" key="3">
    <source>
        <dbReference type="PROSITE-ProRule" id="PRU00691"/>
    </source>
</evidence>
<evidence type="ECO:0000305" key="4"/>
<accession>P0A0B5</accession>
<accession>Q53647</accession>
<dbReference type="EC" id="1.11.1.26" evidence="1"/>
<dbReference type="EMBL" id="BA000017">
    <property type="protein sequence ID" value="BAB56543.1"/>
    <property type="molecule type" value="Genomic_DNA"/>
</dbReference>
<dbReference type="RefSeq" id="WP_000052781.1">
    <property type="nucleotide sequence ID" value="NC_002758.2"/>
</dbReference>
<dbReference type="SMR" id="P0A0B5"/>
<dbReference type="KEGG" id="sav:SAV0381"/>
<dbReference type="HOGENOM" id="CLU_042529_21_3_9"/>
<dbReference type="PhylomeDB" id="P0A0B5"/>
<dbReference type="Proteomes" id="UP000002481">
    <property type="component" value="Chromosome"/>
</dbReference>
<dbReference type="GO" id="GO:0005829">
    <property type="term" value="C:cytosol"/>
    <property type="evidence" value="ECO:0007669"/>
    <property type="project" value="TreeGrafter"/>
</dbReference>
<dbReference type="GO" id="GO:0102039">
    <property type="term" value="F:NADH-dependent peroxiredoxin activity"/>
    <property type="evidence" value="ECO:0007669"/>
    <property type="project" value="UniProtKB-EC"/>
</dbReference>
<dbReference type="GO" id="GO:0008379">
    <property type="term" value="F:thioredoxin peroxidase activity"/>
    <property type="evidence" value="ECO:0007669"/>
    <property type="project" value="TreeGrafter"/>
</dbReference>
<dbReference type="GO" id="GO:0045454">
    <property type="term" value="P:cell redox homeostasis"/>
    <property type="evidence" value="ECO:0007669"/>
    <property type="project" value="TreeGrafter"/>
</dbReference>
<dbReference type="GO" id="GO:0033554">
    <property type="term" value="P:cellular response to stress"/>
    <property type="evidence" value="ECO:0007669"/>
    <property type="project" value="TreeGrafter"/>
</dbReference>
<dbReference type="GO" id="GO:0042744">
    <property type="term" value="P:hydrogen peroxide catabolic process"/>
    <property type="evidence" value="ECO:0007669"/>
    <property type="project" value="TreeGrafter"/>
</dbReference>
<dbReference type="GO" id="GO:0006979">
    <property type="term" value="P:response to oxidative stress"/>
    <property type="evidence" value="ECO:0007669"/>
    <property type="project" value="InterPro"/>
</dbReference>
<dbReference type="CDD" id="cd03015">
    <property type="entry name" value="PRX_Typ2cys"/>
    <property type="match status" value="1"/>
</dbReference>
<dbReference type="FunFam" id="3.40.30.10:FF:000002">
    <property type="entry name" value="Alkyl hydroperoxide reductase C"/>
    <property type="match status" value="1"/>
</dbReference>
<dbReference type="Gene3D" id="3.40.30.10">
    <property type="entry name" value="Glutaredoxin"/>
    <property type="match status" value="1"/>
</dbReference>
<dbReference type="InterPro" id="IPR017559">
    <property type="entry name" value="AhpC"/>
</dbReference>
<dbReference type="InterPro" id="IPR000866">
    <property type="entry name" value="AhpC/TSA"/>
</dbReference>
<dbReference type="InterPro" id="IPR050217">
    <property type="entry name" value="Peroxiredoxin"/>
</dbReference>
<dbReference type="InterPro" id="IPR024706">
    <property type="entry name" value="Peroxiredoxin_AhpC-typ"/>
</dbReference>
<dbReference type="InterPro" id="IPR019479">
    <property type="entry name" value="Peroxiredoxin_C"/>
</dbReference>
<dbReference type="InterPro" id="IPR036249">
    <property type="entry name" value="Thioredoxin-like_sf"/>
</dbReference>
<dbReference type="InterPro" id="IPR013766">
    <property type="entry name" value="Thioredoxin_domain"/>
</dbReference>
<dbReference type="NCBIfam" id="TIGR03137">
    <property type="entry name" value="AhpC"/>
    <property type="match status" value="1"/>
</dbReference>
<dbReference type="PANTHER" id="PTHR10681:SF121">
    <property type="entry name" value="ALKYL HYDROPEROXIDE REDUCTASE C"/>
    <property type="match status" value="1"/>
</dbReference>
<dbReference type="PANTHER" id="PTHR10681">
    <property type="entry name" value="THIOREDOXIN PEROXIDASE"/>
    <property type="match status" value="1"/>
</dbReference>
<dbReference type="Pfam" id="PF10417">
    <property type="entry name" value="1-cysPrx_C"/>
    <property type="match status" value="1"/>
</dbReference>
<dbReference type="Pfam" id="PF00578">
    <property type="entry name" value="AhpC-TSA"/>
    <property type="match status" value="1"/>
</dbReference>
<dbReference type="PIRSF" id="PIRSF000239">
    <property type="entry name" value="AHPC"/>
    <property type="match status" value="1"/>
</dbReference>
<dbReference type="SUPFAM" id="SSF52833">
    <property type="entry name" value="Thioredoxin-like"/>
    <property type="match status" value="1"/>
</dbReference>
<dbReference type="PROSITE" id="PS51352">
    <property type="entry name" value="THIOREDOXIN_2"/>
    <property type="match status" value="1"/>
</dbReference>
<proteinExistence type="inferred from homology"/>
<gene>
    <name type="primary">ahpC</name>
    <name type="ordered locus">SAV0381</name>
</gene>
<sequence>MSLINKEILPFTAQAFDPKKDQFKEVTQEDLKGSWSVVCFYPADFSFVCPTELEDLQNQYEELQKLGVNVFSVSTDTHFVHKAWHDHSDAISKITYTMIGDPSQTITRNFDVLDEATGLAQRGTFIIDPDGVVQASEINADGIGRDASTLAHKIKAAQYVRKNPGEVCPAKWEEGAKTLQPGLDLVGKI</sequence>
<reference key="1">
    <citation type="journal article" date="2001" name="Lancet">
        <title>Whole genome sequencing of meticillin-resistant Staphylococcus aureus.</title>
        <authorList>
            <person name="Kuroda M."/>
            <person name="Ohta T."/>
            <person name="Uchiyama I."/>
            <person name="Baba T."/>
            <person name="Yuzawa H."/>
            <person name="Kobayashi I."/>
            <person name="Cui L."/>
            <person name="Oguchi A."/>
            <person name="Aoki K."/>
            <person name="Nagai Y."/>
            <person name="Lian J.-Q."/>
            <person name="Ito T."/>
            <person name="Kanamori M."/>
            <person name="Matsumaru H."/>
            <person name="Maruyama A."/>
            <person name="Murakami H."/>
            <person name="Hosoyama A."/>
            <person name="Mizutani-Ui Y."/>
            <person name="Takahashi N.K."/>
            <person name="Sawano T."/>
            <person name="Inoue R."/>
            <person name="Kaito C."/>
            <person name="Sekimizu K."/>
            <person name="Hirakawa H."/>
            <person name="Kuhara S."/>
            <person name="Goto S."/>
            <person name="Yabuzaki J."/>
            <person name="Kanehisa M."/>
            <person name="Yamashita A."/>
            <person name="Oshima K."/>
            <person name="Furuya K."/>
            <person name="Yoshino C."/>
            <person name="Shiba T."/>
            <person name="Hattori M."/>
            <person name="Ogasawara N."/>
            <person name="Hayashi H."/>
            <person name="Hiramatsu K."/>
        </authorList>
    </citation>
    <scope>NUCLEOTIDE SEQUENCE [LARGE SCALE GENOMIC DNA]</scope>
    <source>
        <strain>Mu50 / ATCC 700699</strain>
    </source>
</reference>
<protein>
    <recommendedName>
        <fullName>Alkyl hydroperoxide reductase C</fullName>
        <ecNumber evidence="1">1.11.1.26</ecNumber>
    </recommendedName>
    <alternativeName>
        <fullName>Peroxiredoxin</fullName>
    </alternativeName>
    <alternativeName>
        <fullName>Thioredoxin peroxidase</fullName>
    </alternativeName>
</protein>